<accession>A9KDE8</accession>
<sequence length="141" mass="16081">MPNQNLIALGFDFGMKRIGVAVGQTVTHSANAIAILKAQDGVPDWEKIKMLIETWHANVLVVGIPYNMDGSEQTLTFAARKFARKLQTRFGLPVSMVDERLTTIEAKRQWYEQGLTKRPQHLDNYAAKLILEQWLQEQKNE</sequence>
<evidence type="ECO:0000255" key="1">
    <source>
        <dbReference type="HAMAP-Rule" id="MF_00651"/>
    </source>
</evidence>
<keyword id="KW-0963">Cytoplasm</keyword>
<keyword id="KW-0378">Hydrolase</keyword>
<keyword id="KW-0540">Nuclease</keyword>
<keyword id="KW-0690">Ribosome biogenesis</keyword>
<organism>
    <name type="scientific">Coxiella burnetii (strain Dugway 5J108-111)</name>
    <dbReference type="NCBI Taxonomy" id="434922"/>
    <lineage>
        <taxon>Bacteria</taxon>
        <taxon>Pseudomonadati</taxon>
        <taxon>Pseudomonadota</taxon>
        <taxon>Gammaproteobacteria</taxon>
        <taxon>Legionellales</taxon>
        <taxon>Coxiellaceae</taxon>
        <taxon>Coxiella</taxon>
    </lineage>
</organism>
<name>YQGF_COXBN</name>
<proteinExistence type="inferred from homology"/>
<reference key="1">
    <citation type="journal article" date="2009" name="Infect. Immun.">
        <title>Comparative genomics reveal extensive transposon-mediated genomic plasticity and diversity among potential effector proteins within the genus Coxiella.</title>
        <authorList>
            <person name="Beare P.A."/>
            <person name="Unsworth N."/>
            <person name="Andoh M."/>
            <person name="Voth D.E."/>
            <person name="Omsland A."/>
            <person name="Gilk S.D."/>
            <person name="Williams K.P."/>
            <person name="Sobral B.W."/>
            <person name="Kupko J.J. III"/>
            <person name="Porcella S.F."/>
            <person name="Samuel J.E."/>
            <person name="Heinzen R.A."/>
        </authorList>
    </citation>
    <scope>NUCLEOTIDE SEQUENCE [LARGE SCALE GENOMIC DNA]</scope>
    <source>
        <strain>Dugway 5J108-111</strain>
    </source>
</reference>
<protein>
    <recommendedName>
        <fullName evidence="1">Putative pre-16S rRNA nuclease</fullName>
        <ecNumber evidence="1">3.1.-.-</ecNumber>
    </recommendedName>
</protein>
<dbReference type="EC" id="3.1.-.-" evidence="1"/>
<dbReference type="EMBL" id="CP000733">
    <property type="protein sequence ID" value="ABS78083.1"/>
    <property type="molecule type" value="Genomic_DNA"/>
</dbReference>
<dbReference type="SMR" id="A9KDE8"/>
<dbReference type="KEGG" id="cbd:CBUD_2194"/>
<dbReference type="HOGENOM" id="CLU_098240_3_0_6"/>
<dbReference type="Proteomes" id="UP000008555">
    <property type="component" value="Chromosome"/>
</dbReference>
<dbReference type="GO" id="GO:0005829">
    <property type="term" value="C:cytosol"/>
    <property type="evidence" value="ECO:0007669"/>
    <property type="project" value="TreeGrafter"/>
</dbReference>
<dbReference type="GO" id="GO:0004518">
    <property type="term" value="F:nuclease activity"/>
    <property type="evidence" value="ECO:0007669"/>
    <property type="project" value="UniProtKB-KW"/>
</dbReference>
<dbReference type="GO" id="GO:0000967">
    <property type="term" value="P:rRNA 5'-end processing"/>
    <property type="evidence" value="ECO:0007669"/>
    <property type="project" value="UniProtKB-UniRule"/>
</dbReference>
<dbReference type="CDD" id="cd16964">
    <property type="entry name" value="YqgF"/>
    <property type="match status" value="1"/>
</dbReference>
<dbReference type="FunFam" id="3.30.420.140:FF:000022">
    <property type="entry name" value="Putative pre-16S rRNA nuclease"/>
    <property type="match status" value="1"/>
</dbReference>
<dbReference type="Gene3D" id="3.30.420.140">
    <property type="entry name" value="YqgF/RNase H-like domain"/>
    <property type="match status" value="1"/>
</dbReference>
<dbReference type="HAMAP" id="MF_00651">
    <property type="entry name" value="Nuclease_YqgF"/>
    <property type="match status" value="1"/>
</dbReference>
<dbReference type="InterPro" id="IPR012337">
    <property type="entry name" value="RNaseH-like_sf"/>
</dbReference>
<dbReference type="InterPro" id="IPR005227">
    <property type="entry name" value="YqgF"/>
</dbReference>
<dbReference type="InterPro" id="IPR006641">
    <property type="entry name" value="YqgF/RNaseH-like_dom"/>
</dbReference>
<dbReference type="InterPro" id="IPR037027">
    <property type="entry name" value="YqgF/RNaseH-like_dom_sf"/>
</dbReference>
<dbReference type="NCBIfam" id="TIGR00250">
    <property type="entry name" value="RNAse_H_YqgF"/>
    <property type="match status" value="1"/>
</dbReference>
<dbReference type="PANTHER" id="PTHR33317">
    <property type="entry name" value="POLYNUCLEOTIDYL TRANSFERASE, RIBONUCLEASE H-LIKE SUPERFAMILY PROTEIN"/>
    <property type="match status" value="1"/>
</dbReference>
<dbReference type="PANTHER" id="PTHR33317:SF4">
    <property type="entry name" value="POLYNUCLEOTIDYL TRANSFERASE, RIBONUCLEASE H-LIKE SUPERFAMILY PROTEIN"/>
    <property type="match status" value="1"/>
</dbReference>
<dbReference type="Pfam" id="PF03652">
    <property type="entry name" value="RuvX"/>
    <property type="match status" value="1"/>
</dbReference>
<dbReference type="SMART" id="SM00732">
    <property type="entry name" value="YqgFc"/>
    <property type="match status" value="1"/>
</dbReference>
<dbReference type="SUPFAM" id="SSF53098">
    <property type="entry name" value="Ribonuclease H-like"/>
    <property type="match status" value="1"/>
</dbReference>
<feature type="chain" id="PRO_1000131019" description="Putative pre-16S rRNA nuclease">
    <location>
        <begin position="1"/>
        <end position="141"/>
    </location>
</feature>
<gene>
    <name type="ordered locus">CBUD_2194</name>
</gene>
<comment type="function">
    <text evidence="1">Could be a nuclease involved in processing of the 5'-end of pre-16S rRNA.</text>
</comment>
<comment type="subcellular location">
    <subcellularLocation>
        <location evidence="1">Cytoplasm</location>
    </subcellularLocation>
</comment>
<comment type="similarity">
    <text evidence="1">Belongs to the YqgF nuclease family.</text>
</comment>